<feature type="signal peptide" evidence="2">
    <location>
        <begin position="1"/>
        <end position="22"/>
    </location>
</feature>
<feature type="propeptide" id="PRO_0000315470" evidence="1">
    <location>
        <begin position="23"/>
        <end position="50"/>
    </location>
</feature>
<feature type="peptide" id="PRO_0000315471" description="Omega-conotoxin-like TxMKLT1-0141">
    <location>
        <begin position="52"/>
        <end position="76"/>
    </location>
</feature>
<feature type="disulfide bond" evidence="1">
    <location>
        <begin position="52"/>
        <end position="67"/>
    </location>
</feature>
<feature type="disulfide bond" evidence="1">
    <location>
        <begin position="59"/>
        <end position="70"/>
    </location>
</feature>
<feature type="disulfide bond" evidence="1">
    <location>
        <begin position="66"/>
        <end position="75"/>
    </location>
</feature>
<sequence length="76" mass="8504">MKLTCMMIVAVLFLTAWTFATADDSSNGLENLFPKAHHEMKNPEASKLNERCLDAGEICDFFFPTCCGYCILLFCA</sequence>
<dbReference type="EMBL" id="AF193265">
    <property type="protein sequence ID" value="AAF07976.1"/>
    <property type="molecule type" value="mRNA"/>
</dbReference>
<dbReference type="SMR" id="Q9U651"/>
<dbReference type="ConoServer" id="1098">
    <property type="toxin name" value="TxMKLT1-0141 precursor"/>
</dbReference>
<dbReference type="GO" id="GO:0005576">
    <property type="term" value="C:extracellular region"/>
    <property type="evidence" value="ECO:0007669"/>
    <property type="project" value="UniProtKB-SubCell"/>
</dbReference>
<dbReference type="GO" id="GO:0044231">
    <property type="term" value="C:host cell presynaptic membrane"/>
    <property type="evidence" value="ECO:0007669"/>
    <property type="project" value="UniProtKB-KW"/>
</dbReference>
<dbReference type="GO" id="GO:0005246">
    <property type="term" value="F:calcium channel regulator activity"/>
    <property type="evidence" value="ECO:0007669"/>
    <property type="project" value="UniProtKB-KW"/>
</dbReference>
<dbReference type="GO" id="GO:0008200">
    <property type="term" value="F:ion channel inhibitor activity"/>
    <property type="evidence" value="ECO:0007669"/>
    <property type="project" value="InterPro"/>
</dbReference>
<dbReference type="GO" id="GO:0090729">
    <property type="term" value="F:toxin activity"/>
    <property type="evidence" value="ECO:0007669"/>
    <property type="project" value="UniProtKB-KW"/>
</dbReference>
<dbReference type="InterPro" id="IPR004214">
    <property type="entry name" value="Conotoxin"/>
</dbReference>
<dbReference type="Pfam" id="PF02950">
    <property type="entry name" value="Conotoxin"/>
    <property type="match status" value="1"/>
</dbReference>
<organism>
    <name type="scientific">Conus textile</name>
    <name type="common">Cloth-of-gold cone</name>
    <dbReference type="NCBI Taxonomy" id="6494"/>
    <lineage>
        <taxon>Eukaryota</taxon>
        <taxon>Metazoa</taxon>
        <taxon>Spiralia</taxon>
        <taxon>Lophotrochozoa</taxon>
        <taxon>Mollusca</taxon>
        <taxon>Gastropoda</taxon>
        <taxon>Caenogastropoda</taxon>
        <taxon>Neogastropoda</taxon>
        <taxon>Conoidea</taxon>
        <taxon>Conidae</taxon>
        <taxon>Conus</taxon>
        <taxon>Cylinder</taxon>
    </lineage>
</organism>
<keyword id="KW-0108">Calcium channel impairing toxin</keyword>
<keyword id="KW-1015">Disulfide bond</keyword>
<keyword id="KW-0872">Ion channel impairing toxin</keyword>
<keyword id="KW-0960">Knottin</keyword>
<keyword id="KW-0528">Neurotoxin</keyword>
<keyword id="KW-0638">Presynaptic neurotoxin</keyword>
<keyword id="KW-0964">Secreted</keyword>
<keyword id="KW-0732">Signal</keyword>
<keyword id="KW-0800">Toxin</keyword>
<keyword id="KW-1218">Voltage-gated calcium channel impairing toxin</keyword>
<accession>Q9U651</accession>
<evidence type="ECO:0000250" key="1"/>
<evidence type="ECO:0000255" key="2"/>
<evidence type="ECO:0000305" key="3"/>
<comment type="function">
    <text evidence="1">Omega-conotoxins act at presynaptic membranes, they bind and block voltage-gated calcium channels (Cav).</text>
</comment>
<comment type="subcellular location">
    <subcellularLocation>
        <location evidence="1">Secreted</location>
    </subcellularLocation>
</comment>
<comment type="tissue specificity">
    <text>Expressed by the venom duct.</text>
</comment>
<comment type="domain">
    <text evidence="1">The presence of a 'disulfide through disulfide knot' structurally defines this protein as a knottin.</text>
</comment>
<comment type="domain">
    <text>The cysteine framework is VI/VII (C-C-CC-C-C).</text>
</comment>
<comment type="similarity">
    <text evidence="3">Belongs to the conotoxin O1 superfamily.</text>
</comment>
<protein>
    <recommendedName>
        <fullName>Omega-conotoxin-like TxMKLT1-0141</fullName>
    </recommendedName>
</protein>
<proteinExistence type="evidence at transcript level"/>
<reference key="1">
    <citation type="journal article" date="2001" name="Mol. Biol. Evol.">
        <title>Mechanisms for evolving hypervariability: the case of conopeptides.</title>
        <authorList>
            <person name="Conticello S.G."/>
            <person name="Gilad Y."/>
            <person name="Avidan N."/>
            <person name="Ben-Asher E."/>
            <person name="Levy Z."/>
            <person name="Fainzilber M."/>
        </authorList>
    </citation>
    <scope>NUCLEOTIDE SEQUENCE [MRNA]</scope>
    <source>
        <tissue>Venom duct</tissue>
    </source>
</reference>
<name>O161_CONTE</name>